<organism>
    <name type="scientific">Schizosaccharomyces pombe (strain 972 / ATCC 24843)</name>
    <name type="common">Fission yeast</name>
    <dbReference type="NCBI Taxonomy" id="284812"/>
    <lineage>
        <taxon>Eukaryota</taxon>
        <taxon>Fungi</taxon>
        <taxon>Dikarya</taxon>
        <taxon>Ascomycota</taxon>
        <taxon>Taphrinomycotina</taxon>
        <taxon>Schizosaccharomycetes</taxon>
        <taxon>Schizosaccharomycetales</taxon>
        <taxon>Schizosaccharomycetaceae</taxon>
        <taxon>Schizosaccharomyces</taxon>
    </lineage>
</organism>
<keyword id="KW-0067">ATP-binding</keyword>
<keyword id="KW-0333">Golgi apparatus</keyword>
<keyword id="KW-0378">Hydrolase</keyword>
<keyword id="KW-0472">Membrane</keyword>
<keyword id="KW-0547">Nucleotide-binding</keyword>
<keyword id="KW-1185">Reference proteome</keyword>
<keyword id="KW-0812">Transmembrane</keyword>
<keyword id="KW-1133">Transmembrane helix</keyword>
<gene>
    <name evidence="8" type="primary">ynd1</name>
    <name type="ORF">SPCC11E10.05c</name>
</gene>
<name>YND1_SCHPO</name>
<evidence type="ECO:0000250" key="1"/>
<evidence type="ECO:0000250" key="2">
    <source>
        <dbReference type="UniProtKB" id="P40009"/>
    </source>
</evidence>
<evidence type="ECO:0000255" key="3"/>
<evidence type="ECO:0000269" key="4">
    <source>
    </source>
</evidence>
<evidence type="ECO:0000269" key="5">
    <source>
    </source>
</evidence>
<evidence type="ECO:0000303" key="6">
    <source>
    </source>
</evidence>
<evidence type="ECO:0000305" key="7"/>
<evidence type="ECO:0000312" key="8">
    <source>
        <dbReference type="EMBL" id="CAB57847.1"/>
    </source>
</evidence>
<accession>Q9USP2</accession>
<feature type="chain" id="PRO_0000347282" description="Golgi apyrase">
    <location>
        <begin position="1"/>
        <end position="572"/>
    </location>
</feature>
<feature type="topological domain" description="Lumenal" evidence="2 3">
    <location>
        <begin position="1"/>
        <end position="470"/>
    </location>
</feature>
<feature type="transmembrane region" description="Helical" evidence="3">
    <location>
        <begin position="471"/>
        <end position="491"/>
    </location>
</feature>
<feature type="topological domain" description="Cytoplasmic" evidence="2 3">
    <location>
        <begin position="492"/>
        <end position="572"/>
    </location>
</feature>
<feature type="active site" description="Proton acceptor" evidence="1">
    <location>
        <position position="145"/>
    </location>
</feature>
<comment type="function">
    <text evidence="2 4">Catalyzes the hydrolysis of phosphoanhydride bonds of nucleoside tri- and di-phosphates. Required for Golgi glycosylation and cell wall integrity. Involved in N-mannosylation of proteins in Golgi.</text>
</comment>
<comment type="catalytic activity">
    <reaction evidence="4">
        <text>a ribonucleoside 5'-triphosphate + 2 H2O = a ribonucleoside 5'-phosphate + 2 phosphate + 2 H(+)</text>
        <dbReference type="Rhea" id="RHEA:36795"/>
        <dbReference type="ChEBI" id="CHEBI:15377"/>
        <dbReference type="ChEBI" id="CHEBI:15378"/>
        <dbReference type="ChEBI" id="CHEBI:43474"/>
        <dbReference type="ChEBI" id="CHEBI:58043"/>
        <dbReference type="ChEBI" id="CHEBI:61557"/>
        <dbReference type="EC" id="3.6.1.5"/>
    </reaction>
</comment>
<comment type="cofactor">
    <cofactor evidence="4">
        <name>Ca(2+)</name>
        <dbReference type="ChEBI" id="CHEBI:29108"/>
    </cofactor>
    <cofactor evidence="4">
        <name>Mg(2+)</name>
        <dbReference type="ChEBI" id="CHEBI:18420"/>
    </cofactor>
    <cofactor evidence="4">
        <name>Mn(2+)</name>
        <dbReference type="ChEBI" id="CHEBI:29035"/>
    </cofactor>
    <text evidence="4">Divalent metal cations. Ca(2+), Mg(2+) or Mn(2+).</text>
</comment>
<comment type="pathway">
    <text evidence="4">Protein modification; protein glycosylation.</text>
</comment>
<comment type="subcellular location">
    <subcellularLocation>
        <location evidence="4 5">Golgi apparatus</location>
    </subcellularLocation>
    <subcellularLocation>
        <location evidence="3">Membrane</location>
        <topology evidence="3">Single-pass membrane protein</topology>
    </subcellularLocation>
</comment>
<comment type="similarity">
    <text evidence="3">Belongs to the GDA1/CD39 NTPase family.</text>
</comment>
<dbReference type="EC" id="3.6.1.5"/>
<dbReference type="EMBL" id="CU329672">
    <property type="protein sequence ID" value="CAB57847.1"/>
    <property type="molecule type" value="Genomic_DNA"/>
</dbReference>
<dbReference type="PIR" id="T40856">
    <property type="entry name" value="T40856"/>
</dbReference>
<dbReference type="RefSeq" id="NP_588201.1">
    <property type="nucleotide sequence ID" value="NM_001023191.2"/>
</dbReference>
<dbReference type="SMR" id="Q9USP2"/>
<dbReference type="BioGRID" id="275324">
    <property type="interactions" value="12"/>
</dbReference>
<dbReference type="FunCoup" id="Q9USP2">
    <property type="interactions" value="213"/>
</dbReference>
<dbReference type="STRING" id="284812.Q9USP2"/>
<dbReference type="iPTMnet" id="Q9USP2"/>
<dbReference type="PaxDb" id="4896-SPCC11E10.05c.1"/>
<dbReference type="EnsemblFungi" id="SPCC11E10.05c.1">
    <property type="protein sequence ID" value="SPCC11E10.05c.1:pep"/>
    <property type="gene ID" value="SPCC11E10.05c"/>
</dbReference>
<dbReference type="GeneID" id="2538741"/>
<dbReference type="KEGG" id="spo:2538741"/>
<dbReference type="PomBase" id="SPCC11E10.05c">
    <property type="gene designation" value="ynd1"/>
</dbReference>
<dbReference type="VEuPathDB" id="FungiDB:SPCC11E10.05c"/>
<dbReference type="eggNOG" id="KOG1386">
    <property type="taxonomic scope" value="Eukaryota"/>
</dbReference>
<dbReference type="HOGENOM" id="CLU_010246_3_1_1"/>
<dbReference type="InParanoid" id="Q9USP2"/>
<dbReference type="OMA" id="ENPFHRH"/>
<dbReference type="PhylomeDB" id="Q9USP2"/>
<dbReference type="Reactome" id="R-SPO-8850843">
    <property type="pathway name" value="Phosphate bond hydrolysis by NTPDase proteins"/>
</dbReference>
<dbReference type="UniPathway" id="UPA00378"/>
<dbReference type="PRO" id="PR:Q9USP2"/>
<dbReference type="Proteomes" id="UP000002485">
    <property type="component" value="Chromosome III"/>
</dbReference>
<dbReference type="GO" id="GO:0005794">
    <property type="term" value="C:Golgi apparatus"/>
    <property type="evidence" value="ECO:0000314"/>
    <property type="project" value="PomBase"/>
</dbReference>
<dbReference type="GO" id="GO:0016020">
    <property type="term" value="C:membrane"/>
    <property type="evidence" value="ECO:0000318"/>
    <property type="project" value="GO_Central"/>
</dbReference>
<dbReference type="GO" id="GO:0043262">
    <property type="term" value="F:ADP phosphatase activity"/>
    <property type="evidence" value="ECO:0000314"/>
    <property type="project" value="PomBase"/>
</dbReference>
<dbReference type="GO" id="GO:0004050">
    <property type="term" value="F:apyrase activity"/>
    <property type="evidence" value="ECO:0007669"/>
    <property type="project" value="UniProtKB-EC"/>
</dbReference>
<dbReference type="GO" id="GO:0005524">
    <property type="term" value="F:ATP binding"/>
    <property type="evidence" value="ECO:0007669"/>
    <property type="project" value="UniProtKB-KW"/>
</dbReference>
<dbReference type="GO" id="GO:0016887">
    <property type="term" value="F:ATP hydrolysis activity"/>
    <property type="evidence" value="ECO:0000314"/>
    <property type="project" value="PomBase"/>
</dbReference>
<dbReference type="GO" id="GO:0036384">
    <property type="term" value="F:CDP phosphatase activity"/>
    <property type="evidence" value="ECO:0000314"/>
    <property type="project" value="PomBase"/>
</dbReference>
<dbReference type="GO" id="GO:0004382">
    <property type="term" value="F:GDP phosphatase activity"/>
    <property type="evidence" value="ECO:0000314"/>
    <property type="project" value="PomBase"/>
</dbReference>
<dbReference type="GO" id="GO:0003924">
    <property type="term" value="F:GTPase activity"/>
    <property type="evidence" value="ECO:0000314"/>
    <property type="project" value="PomBase"/>
</dbReference>
<dbReference type="GO" id="GO:0047429">
    <property type="term" value="F:nucleoside triphosphate diphosphatase activity"/>
    <property type="evidence" value="ECO:0000266"/>
    <property type="project" value="PomBase"/>
</dbReference>
<dbReference type="GO" id="GO:0017111">
    <property type="term" value="F:ribonucleoside triphosphate phosphatase activity"/>
    <property type="evidence" value="ECO:0000318"/>
    <property type="project" value="GO_Central"/>
</dbReference>
<dbReference type="GO" id="GO:0045134">
    <property type="term" value="F:UDP phosphatase activity"/>
    <property type="evidence" value="ECO:0000314"/>
    <property type="project" value="PomBase"/>
</dbReference>
<dbReference type="GO" id="GO:0046036">
    <property type="term" value="P:CTP metabolic process"/>
    <property type="evidence" value="ECO:0000318"/>
    <property type="project" value="GO_Central"/>
</dbReference>
<dbReference type="GO" id="GO:0006486">
    <property type="term" value="P:protein glycosylation"/>
    <property type="evidence" value="ECO:0007669"/>
    <property type="project" value="UniProtKB-UniPathway"/>
</dbReference>
<dbReference type="GO" id="GO:0006256">
    <property type="term" value="P:UDP catabolic process"/>
    <property type="evidence" value="ECO:0000318"/>
    <property type="project" value="GO_Central"/>
</dbReference>
<dbReference type="CDD" id="cd24039">
    <property type="entry name" value="ASKHA_NBD_YND1-like"/>
    <property type="match status" value="1"/>
</dbReference>
<dbReference type="Gene3D" id="3.30.420.40">
    <property type="match status" value="1"/>
</dbReference>
<dbReference type="Gene3D" id="3.30.420.150">
    <property type="entry name" value="Exopolyphosphatase. Domain 2"/>
    <property type="match status" value="1"/>
</dbReference>
<dbReference type="InterPro" id="IPR000407">
    <property type="entry name" value="GDA1_CD39_NTPase"/>
</dbReference>
<dbReference type="PANTHER" id="PTHR11782">
    <property type="entry name" value="ADENOSINE/GUANOSINE DIPHOSPHATASE"/>
    <property type="match status" value="1"/>
</dbReference>
<dbReference type="PANTHER" id="PTHR11782:SF121">
    <property type="entry name" value="NUCLEOSIDE-DIPHOSPHATASE MIG-23"/>
    <property type="match status" value="1"/>
</dbReference>
<dbReference type="Pfam" id="PF01150">
    <property type="entry name" value="GDA1_CD39"/>
    <property type="match status" value="1"/>
</dbReference>
<dbReference type="PROSITE" id="PS01238">
    <property type="entry name" value="GDA1_CD39_NTPASE"/>
    <property type="match status" value="1"/>
</dbReference>
<sequence>MVRKYGIFIDAGSSGSRLLIYSWDYDTDSSLSDKVKKLPLIETGIGDGGKWSLKVQPGISSFANNPKHVGKKHLKELLDFAAHAIPKDVHKETPVFLSATAGMRLLGVDAQNKILSHACRYIKKNYDFDIPNCSNSIRVIDGKAEGMYGWLATNYLLKTLEEKDTSTVGFLDMGGASVQIAFELPPSQLKNYKDSISTVHIGLQNGQQLEYPLFVTTWLGFGANEAYRRYLGLLIESENGKVGNTLSDPCSLRGRTYDIDGIEFAGTGDLKQCLKLTYNLLNKDKPCSMDPCNFDGISIPPVDFANTEFVGVSEFWYTTNDVFDMGGSYHFPNFYKKVDEYCGTEWETMLSRLYNKELTPSTDENKLEKLCFKASWALNVLHEGFDVPKSNTSSNDAKDGLSVIPAYHSPFTSLEKIERTEVSWTLGQVLLYASNQQLLAKPEYANYYMDPYGKLIASPSKHWMRLFPNKLFFILSFIFCLFFLFSLVLFGYDPKRRQRFKKFLLRLQRRKAPYIMSANGSYEDIADFSDDLEMSSPSKWHGPPIRTTSSHVLADRLSFTASRERTPRSPFP</sequence>
<reference evidence="8" key="1">
    <citation type="journal article" date="2002" name="Nature">
        <title>The genome sequence of Schizosaccharomyces pombe.</title>
        <authorList>
            <person name="Wood V."/>
            <person name="Gwilliam R."/>
            <person name="Rajandream M.A."/>
            <person name="Lyne M.H."/>
            <person name="Lyne R."/>
            <person name="Stewart A."/>
            <person name="Sgouros J.G."/>
            <person name="Peat N."/>
            <person name="Hayles J."/>
            <person name="Baker S.G."/>
            <person name="Basham D."/>
            <person name="Bowman S."/>
            <person name="Brooks K."/>
            <person name="Brown D."/>
            <person name="Brown S."/>
            <person name="Chillingworth T."/>
            <person name="Churcher C.M."/>
            <person name="Collins M."/>
            <person name="Connor R."/>
            <person name="Cronin A."/>
            <person name="Davis P."/>
            <person name="Feltwell T."/>
            <person name="Fraser A."/>
            <person name="Gentles S."/>
            <person name="Goble A."/>
            <person name="Hamlin N."/>
            <person name="Harris D.E."/>
            <person name="Hidalgo J."/>
            <person name="Hodgson G."/>
            <person name="Holroyd S."/>
            <person name="Hornsby T."/>
            <person name="Howarth S."/>
            <person name="Huckle E.J."/>
            <person name="Hunt S."/>
            <person name="Jagels K."/>
            <person name="James K.D."/>
            <person name="Jones L."/>
            <person name="Jones M."/>
            <person name="Leather S."/>
            <person name="McDonald S."/>
            <person name="McLean J."/>
            <person name="Mooney P."/>
            <person name="Moule S."/>
            <person name="Mungall K.L."/>
            <person name="Murphy L.D."/>
            <person name="Niblett D."/>
            <person name="Odell C."/>
            <person name="Oliver K."/>
            <person name="O'Neil S."/>
            <person name="Pearson D."/>
            <person name="Quail M.A."/>
            <person name="Rabbinowitsch E."/>
            <person name="Rutherford K.M."/>
            <person name="Rutter S."/>
            <person name="Saunders D."/>
            <person name="Seeger K."/>
            <person name="Sharp S."/>
            <person name="Skelton J."/>
            <person name="Simmonds M.N."/>
            <person name="Squares R."/>
            <person name="Squares S."/>
            <person name="Stevens K."/>
            <person name="Taylor K."/>
            <person name="Taylor R.G."/>
            <person name="Tivey A."/>
            <person name="Walsh S.V."/>
            <person name="Warren T."/>
            <person name="Whitehead S."/>
            <person name="Woodward J.R."/>
            <person name="Volckaert G."/>
            <person name="Aert R."/>
            <person name="Robben J."/>
            <person name="Grymonprez B."/>
            <person name="Weltjens I."/>
            <person name="Vanstreels E."/>
            <person name="Rieger M."/>
            <person name="Schaefer M."/>
            <person name="Mueller-Auer S."/>
            <person name="Gabel C."/>
            <person name="Fuchs M."/>
            <person name="Duesterhoeft A."/>
            <person name="Fritzc C."/>
            <person name="Holzer E."/>
            <person name="Moestl D."/>
            <person name="Hilbert H."/>
            <person name="Borzym K."/>
            <person name="Langer I."/>
            <person name="Beck A."/>
            <person name="Lehrach H."/>
            <person name="Reinhardt R."/>
            <person name="Pohl T.M."/>
            <person name="Eger P."/>
            <person name="Zimmermann W."/>
            <person name="Wedler H."/>
            <person name="Wambutt R."/>
            <person name="Purnelle B."/>
            <person name="Goffeau A."/>
            <person name="Cadieu E."/>
            <person name="Dreano S."/>
            <person name="Gloux S."/>
            <person name="Lelaure V."/>
            <person name="Mottier S."/>
            <person name="Galibert F."/>
            <person name="Aves S.J."/>
            <person name="Xiang Z."/>
            <person name="Hunt C."/>
            <person name="Moore K."/>
            <person name="Hurst S.M."/>
            <person name="Lucas M."/>
            <person name="Rochet M."/>
            <person name="Gaillardin C."/>
            <person name="Tallada V.A."/>
            <person name="Garzon A."/>
            <person name="Thode G."/>
            <person name="Daga R.R."/>
            <person name="Cruzado L."/>
            <person name="Jimenez J."/>
            <person name="Sanchez M."/>
            <person name="del Rey F."/>
            <person name="Benito J."/>
            <person name="Dominguez A."/>
            <person name="Revuelta J.L."/>
            <person name="Moreno S."/>
            <person name="Armstrong J."/>
            <person name="Forsburg S.L."/>
            <person name="Cerutti L."/>
            <person name="Lowe T."/>
            <person name="McCombie W.R."/>
            <person name="Paulsen I."/>
            <person name="Potashkin J."/>
            <person name="Shpakovski G.V."/>
            <person name="Ussery D."/>
            <person name="Barrell B.G."/>
            <person name="Nurse P."/>
        </authorList>
    </citation>
    <scope>NUCLEOTIDE SEQUENCE [LARGE SCALE GENOMIC DNA]</scope>
    <source>
        <strain>972 / ATCC 24843</strain>
    </source>
</reference>
<reference evidence="7" key="2">
    <citation type="journal article" date="2003" name="J. Biol. Chem.">
        <title>Nucleoside diphosphatase and glycosyltransferase activities can localize to different subcellular compartments in Schizosaccharomyces pombe.</title>
        <authorList>
            <person name="D'Alessio C."/>
            <person name="Trombetta E.S."/>
            <person name="Parodi A.J."/>
        </authorList>
    </citation>
    <scope>FUNCTION</scope>
    <scope>ENZYME ACTIVITY</scope>
    <scope>COFACTOR</scope>
    <scope>SUBCELLULAR LOCATION</scope>
</reference>
<reference evidence="7" key="3">
    <citation type="journal article" date="2006" name="Nat. Biotechnol.">
        <title>ORFeome cloning and global analysis of protein localization in the fission yeast Schizosaccharomyces pombe.</title>
        <authorList>
            <person name="Matsuyama A."/>
            <person name="Arai R."/>
            <person name="Yashiroda Y."/>
            <person name="Shirai A."/>
            <person name="Kamata A."/>
            <person name="Sekido S."/>
            <person name="Kobayashi Y."/>
            <person name="Hashimoto A."/>
            <person name="Hamamoto M."/>
            <person name="Hiraoka Y."/>
            <person name="Horinouchi S."/>
            <person name="Yoshida M."/>
        </authorList>
    </citation>
    <scope>SUBCELLULAR LOCATION [LARGE SCALE ANALYSIS]</scope>
</reference>
<protein>
    <recommendedName>
        <fullName evidence="6">Golgi apyrase</fullName>
        <ecNumber>3.6.1.5</ecNumber>
    </recommendedName>
    <alternativeName>
        <fullName evidence="2">ATP-diphosphatase</fullName>
    </alternativeName>
    <alternativeName>
        <fullName evidence="2">ATP-diphosphohydrolase</fullName>
    </alternativeName>
    <alternativeName>
        <fullName evidence="2">Adenosine diphosphatase</fullName>
        <shortName evidence="2">ADPase</shortName>
    </alternativeName>
    <alternativeName>
        <fullName evidence="2">Golgi nucleoside diphosphatase</fullName>
    </alternativeName>
</protein>
<proteinExistence type="inferred from homology"/>